<accession>Q7UZN3</accession>
<feature type="chain" id="PRO_0000116976" description="Adenosylhomocysteinase">
    <location>
        <begin position="1"/>
        <end position="472"/>
    </location>
</feature>
<feature type="binding site" evidence="1">
    <location>
        <position position="64"/>
    </location>
    <ligand>
        <name>substrate</name>
    </ligand>
</feature>
<feature type="binding site" evidence="1">
    <location>
        <position position="138"/>
    </location>
    <ligand>
        <name>substrate</name>
    </ligand>
</feature>
<feature type="binding site" evidence="1">
    <location>
        <position position="198"/>
    </location>
    <ligand>
        <name>substrate</name>
    </ligand>
</feature>
<feature type="binding site" evidence="1">
    <location>
        <begin position="199"/>
        <end position="201"/>
    </location>
    <ligand>
        <name>NAD(+)</name>
        <dbReference type="ChEBI" id="CHEBI:57540"/>
    </ligand>
</feature>
<feature type="binding site" evidence="1">
    <location>
        <position position="228"/>
    </location>
    <ligand>
        <name>substrate</name>
    </ligand>
</feature>
<feature type="binding site" evidence="1">
    <location>
        <position position="232"/>
    </location>
    <ligand>
        <name>substrate</name>
    </ligand>
</feature>
<feature type="binding site" evidence="1">
    <location>
        <position position="233"/>
    </location>
    <ligand>
        <name>NAD(+)</name>
        <dbReference type="ChEBI" id="CHEBI:57540"/>
    </ligand>
</feature>
<feature type="binding site" evidence="1">
    <location>
        <begin position="262"/>
        <end position="267"/>
    </location>
    <ligand>
        <name>NAD(+)</name>
        <dbReference type="ChEBI" id="CHEBI:57540"/>
    </ligand>
</feature>
<feature type="binding site" evidence="1">
    <location>
        <position position="285"/>
    </location>
    <ligand>
        <name>NAD(+)</name>
        <dbReference type="ChEBI" id="CHEBI:57540"/>
    </ligand>
</feature>
<feature type="binding site" evidence="1">
    <location>
        <position position="320"/>
    </location>
    <ligand>
        <name>NAD(+)</name>
        <dbReference type="ChEBI" id="CHEBI:57540"/>
    </ligand>
</feature>
<feature type="binding site" evidence="1">
    <location>
        <begin position="341"/>
        <end position="343"/>
    </location>
    <ligand>
        <name>NAD(+)</name>
        <dbReference type="ChEBI" id="CHEBI:57540"/>
    </ligand>
</feature>
<feature type="binding site" evidence="1">
    <location>
        <position position="386"/>
    </location>
    <ligand>
        <name>NAD(+)</name>
        <dbReference type="ChEBI" id="CHEBI:57540"/>
    </ligand>
</feature>
<sequence length="472" mass="51826">MVIANSIKTSIPNYVIKDISLSDFGRKEIKIAETEMPGLMALRDKHHSDKPLNGAKIAGSLHMTIQTAVLIETLVDLGAQVKWASCNIFSTQDHAAAAIAEQGISVYAKKGESLDEYWQYTHYILDWGTDSPNMILDDGGDATGLLILGSKAEKDLSVLKNPSNEEEIALFNSIRSKLQEDSSFYSRIKGNIIGVTEETTTGVARLYQLQKQNALPFPAINVNDSVTKSKFDNLYGCRESLVDSIKRATDVMIAGKVALVMGFGDVGKGSAQSLRGLGAIVKVAEVDPICALQAAMEGFSVVTLNDVVEDIDIFVTATGNYQVITNDNLIKMKDEAIVCNIGHFDNEIDVASLKDYPWENIKPQVDHITLPSGNKIILLAEGRLVNLGCATGHPSFVMSNSFTNQVLAQIELFNKSDEYSKEVYVLPKHLDEMVARLHLDKIGAKLTKLTKDQADYINVSVEGPYKPEQYRY</sequence>
<dbReference type="EC" id="3.13.2.1" evidence="1"/>
<dbReference type="EMBL" id="BX548174">
    <property type="protein sequence ID" value="CAE20084.1"/>
    <property type="molecule type" value="Genomic_DNA"/>
</dbReference>
<dbReference type="RefSeq" id="WP_011133252.1">
    <property type="nucleotide sequence ID" value="NC_005072.1"/>
</dbReference>
<dbReference type="SMR" id="Q7UZN3"/>
<dbReference type="STRING" id="59919.PMM1625"/>
<dbReference type="KEGG" id="pmm:PMM1625"/>
<dbReference type="eggNOG" id="COG0499">
    <property type="taxonomic scope" value="Bacteria"/>
</dbReference>
<dbReference type="HOGENOM" id="CLU_025194_2_1_3"/>
<dbReference type="OrthoDB" id="9802717at2"/>
<dbReference type="UniPathway" id="UPA00314">
    <property type="reaction ID" value="UER00076"/>
</dbReference>
<dbReference type="Proteomes" id="UP000001026">
    <property type="component" value="Chromosome"/>
</dbReference>
<dbReference type="GO" id="GO:0005829">
    <property type="term" value="C:cytosol"/>
    <property type="evidence" value="ECO:0007669"/>
    <property type="project" value="TreeGrafter"/>
</dbReference>
<dbReference type="GO" id="GO:0004013">
    <property type="term" value="F:adenosylhomocysteinase activity"/>
    <property type="evidence" value="ECO:0007669"/>
    <property type="project" value="UniProtKB-UniRule"/>
</dbReference>
<dbReference type="GO" id="GO:0071269">
    <property type="term" value="P:L-homocysteine biosynthetic process"/>
    <property type="evidence" value="ECO:0007669"/>
    <property type="project" value="UniProtKB-UniRule"/>
</dbReference>
<dbReference type="GO" id="GO:0006730">
    <property type="term" value="P:one-carbon metabolic process"/>
    <property type="evidence" value="ECO:0007669"/>
    <property type="project" value="UniProtKB-KW"/>
</dbReference>
<dbReference type="GO" id="GO:0033353">
    <property type="term" value="P:S-adenosylmethionine cycle"/>
    <property type="evidence" value="ECO:0007669"/>
    <property type="project" value="TreeGrafter"/>
</dbReference>
<dbReference type="CDD" id="cd00401">
    <property type="entry name" value="SAHH"/>
    <property type="match status" value="1"/>
</dbReference>
<dbReference type="FunFam" id="3.40.50.720:FF:000004">
    <property type="entry name" value="Adenosylhomocysteinase"/>
    <property type="match status" value="1"/>
</dbReference>
<dbReference type="Gene3D" id="3.40.50.1480">
    <property type="entry name" value="Adenosylhomocysteinase-like"/>
    <property type="match status" value="1"/>
</dbReference>
<dbReference type="Gene3D" id="3.40.50.720">
    <property type="entry name" value="NAD(P)-binding Rossmann-like Domain"/>
    <property type="match status" value="1"/>
</dbReference>
<dbReference type="HAMAP" id="MF_00563">
    <property type="entry name" value="AdoHcyase"/>
    <property type="match status" value="1"/>
</dbReference>
<dbReference type="InterPro" id="IPR042172">
    <property type="entry name" value="Adenosylhomocyst_ase-like_sf"/>
</dbReference>
<dbReference type="InterPro" id="IPR000043">
    <property type="entry name" value="Adenosylhomocysteinase-like"/>
</dbReference>
<dbReference type="InterPro" id="IPR015878">
    <property type="entry name" value="Ado_hCys_hydrolase_NAD-bd"/>
</dbReference>
<dbReference type="InterPro" id="IPR036291">
    <property type="entry name" value="NAD(P)-bd_dom_sf"/>
</dbReference>
<dbReference type="InterPro" id="IPR020082">
    <property type="entry name" value="S-Ado-L-homoCys_hydrolase_CS"/>
</dbReference>
<dbReference type="NCBIfam" id="TIGR00936">
    <property type="entry name" value="ahcY"/>
    <property type="match status" value="1"/>
</dbReference>
<dbReference type="NCBIfam" id="NF004005">
    <property type="entry name" value="PRK05476.2-3"/>
    <property type="match status" value="1"/>
</dbReference>
<dbReference type="PANTHER" id="PTHR23420">
    <property type="entry name" value="ADENOSYLHOMOCYSTEINASE"/>
    <property type="match status" value="1"/>
</dbReference>
<dbReference type="PANTHER" id="PTHR23420:SF0">
    <property type="entry name" value="ADENOSYLHOMOCYSTEINASE"/>
    <property type="match status" value="1"/>
</dbReference>
<dbReference type="Pfam" id="PF05221">
    <property type="entry name" value="AdoHcyase"/>
    <property type="match status" value="1"/>
</dbReference>
<dbReference type="Pfam" id="PF00670">
    <property type="entry name" value="AdoHcyase_NAD"/>
    <property type="match status" value="1"/>
</dbReference>
<dbReference type="PIRSF" id="PIRSF001109">
    <property type="entry name" value="Ad_hcy_hydrolase"/>
    <property type="match status" value="1"/>
</dbReference>
<dbReference type="SMART" id="SM00996">
    <property type="entry name" value="AdoHcyase"/>
    <property type="match status" value="1"/>
</dbReference>
<dbReference type="SMART" id="SM00997">
    <property type="entry name" value="AdoHcyase_NAD"/>
    <property type="match status" value="1"/>
</dbReference>
<dbReference type="SUPFAM" id="SSF52283">
    <property type="entry name" value="Formate/glycerate dehydrogenase catalytic domain-like"/>
    <property type="match status" value="1"/>
</dbReference>
<dbReference type="SUPFAM" id="SSF51735">
    <property type="entry name" value="NAD(P)-binding Rossmann-fold domains"/>
    <property type="match status" value="1"/>
</dbReference>
<dbReference type="PROSITE" id="PS00738">
    <property type="entry name" value="ADOHCYASE_1"/>
    <property type="match status" value="1"/>
</dbReference>
<dbReference type="PROSITE" id="PS00739">
    <property type="entry name" value="ADOHCYASE_2"/>
    <property type="match status" value="1"/>
</dbReference>
<organism>
    <name type="scientific">Prochlorococcus marinus subsp. pastoris (strain CCMP1986 / NIES-2087 / MED4)</name>
    <dbReference type="NCBI Taxonomy" id="59919"/>
    <lineage>
        <taxon>Bacteria</taxon>
        <taxon>Bacillati</taxon>
        <taxon>Cyanobacteriota</taxon>
        <taxon>Cyanophyceae</taxon>
        <taxon>Synechococcales</taxon>
        <taxon>Prochlorococcaceae</taxon>
        <taxon>Prochlorococcus</taxon>
    </lineage>
</organism>
<gene>
    <name evidence="1" type="primary">ahcY</name>
    <name type="ordered locus">PMM1625</name>
</gene>
<proteinExistence type="inferred from homology"/>
<name>SAHH_PROMP</name>
<comment type="function">
    <text evidence="1">May play a key role in the regulation of the intracellular concentration of adenosylhomocysteine.</text>
</comment>
<comment type="catalytic activity">
    <reaction evidence="1">
        <text>S-adenosyl-L-homocysteine + H2O = L-homocysteine + adenosine</text>
        <dbReference type="Rhea" id="RHEA:21708"/>
        <dbReference type="ChEBI" id="CHEBI:15377"/>
        <dbReference type="ChEBI" id="CHEBI:16335"/>
        <dbReference type="ChEBI" id="CHEBI:57856"/>
        <dbReference type="ChEBI" id="CHEBI:58199"/>
        <dbReference type="EC" id="3.13.2.1"/>
    </reaction>
</comment>
<comment type="cofactor">
    <cofactor evidence="1">
        <name>NAD(+)</name>
        <dbReference type="ChEBI" id="CHEBI:57540"/>
    </cofactor>
    <text evidence="1">Binds 1 NAD(+) per subunit.</text>
</comment>
<comment type="pathway">
    <text evidence="1">Amino-acid biosynthesis; L-homocysteine biosynthesis; L-homocysteine from S-adenosyl-L-homocysteine: step 1/1.</text>
</comment>
<comment type="subcellular location">
    <subcellularLocation>
        <location evidence="1">Cytoplasm</location>
    </subcellularLocation>
</comment>
<comment type="similarity">
    <text evidence="1">Belongs to the adenosylhomocysteinase family.</text>
</comment>
<protein>
    <recommendedName>
        <fullName evidence="1">Adenosylhomocysteinase</fullName>
        <ecNumber evidence="1">3.13.2.1</ecNumber>
    </recommendedName>
    <alternativeName>
        <fullName evidence="1">S-adenosyl-L-homocysteine hydrolase</fullName>
        <shortName evidence="1">AdoHcyase</shortName>
    </alternativeName>
</protein>
<reference key="1">
    <citation type="journal article" date="2003" name="Nature">
        <title>Genome divergence in two Prochlorococcus ecotypes reflects oceanic niche differentiation.</title>
        <authorList>
            <person name="Rocap G."/>
            <person name="Larimer F.W."/>
            <person name="Lamerdin J.E."/>
            <person name="Malfatti S."/>
            <person name="Chain P."/>
            <person name="Ahlgren N.A."/>
            <person name="Arellano A."/>
            <person name="Coleman M."/>
            <person name="Hauser L."/>
            <person name="Hess W.R."/>
            <person name="Johnson Z.I."/>
            <person name="Land M.L."/>
            <person name="Lindell D."/>
            <person name="Post A.F."/>
            <person name="Regala W."/>
            <person name="Shah M."/>
            <person name="Shaw S.L."/>
            <person name="Steglich C."/>
            <person name="Sullivan M.B."/>
            <person name="Ting C.S."/>
            <person name="Tolonen A."/>
            <person name="Webb E.A."/>
            <person name="Zinser E.R."/>
            <person name="Chisholm S.W."/>
        </authorList>
    </citation>
    <scope>NUCLEOTIDE SEQUENCE [LARGE SCALE GENOMIC DNA]</scope>
    <source>
        <strain>CCMP1986 / NIES-2087 / MED4</strain>
    </source>
</reference>
<keyword id="KW-0963">Cytoplasm</keyword>
<keyword id="KW-0378">Hydrolase</keyword>
<keyword id="KW-0520">NAD</keyword>
<keyword id="KW-0554">One-carbon metabolism</keyword>
<evidence type="ECO:0000255" key="1">
    <source>
        <dbReference type="HAMAP-Rule" id="MF_00563"/>
    </source>
</evidence>